<organism>
    <name type="scientific">Arabidopsis thaliana</name>
    <name type="common">Mouse-ear cress</name>
    <dbReference type="NCBI Taxonomy" id="3702"/>
    <lineage>
        <taxon>Eukaryota</taxon>
        <taxon>Viridiplantae</taxon>
        <taxon>Streptophyta</taxon>
        <taxon>Embryophyta</taxon>
        <taxon>Tracheophyta</taxon>
        <taxon>Spermatophyta</taxon>
        <taxon>Magnoliopsida</taxon>
        <taxon>eudicotyledons</taxon>
        <taxon>Gunneridae</taxon>
        <taxon>Pentapetalae</taxon>
        <taxon>rosids</taxon>
        <taxon>malvids</taxon>
        <taxon>Brassicales</taxon>
        <taxon>Brassicaceae</taxon>
        <taxon>Camelineae</taxon>
        <taxon>Arabidopsis</taxon>
    </lineage>
</organism>
<evidence type="ECO:0000250" key="1"/>
<evidence type="ECO:0000255" key="2"/>
<evidence type="ECO:0000269" key="3">
    <source>
    </source>
</evidence>
<evidence type="ECO:0000269" key="4">
    <source>
    </source>
</evidence>
<evidence type="ECO:0000269" key="5">
    <source>
    </source>
</evidence>
<evidence type="ECO:0000269" key="6">
    <source>
    </source>
</evidence>
<evidence type="ECO:0000269" key="7">
    <source>
    </source>
</evidence>
<evidence type="ECO:0000269" key="8">
    <source>
    </source>
</evidence>
<evidence type="ECO:0000305" key="9"/>
<evidence type="ECO:0000305" key="10">
    <source>
    </source>
</evidence>
<accession>Q9LMX7</accession>
<comment type="function">
    <text evidence="3 4 5 6 7">Plays a role in regulating directional growth at the meristem/organ boundary. Is required for the promotion of leaf and floral organ growth and for the prolongation of the plastochron. Promotes organ growth in a non-cell-autonomous manner and may generate a mobile growth signal distinct from the classical phytohormones that prevents premature arrest of proliferation, until the correct primordium size has been reached. Functions probably in association with CYP78A7 in regulating relative growth of the shoot apical meristem and plant organs. Is required locally in developing ovules to stimulates cell proliferation and promote seed growth.</text>
</comment>
<comment type="cofactor">
    <cofactor evidence="1">
        <name>heme</name>
        <dbReference type="ChEBI" id="CHEBI:30413"/>
    </cofactor>
</comment>
<comment type="subcellular location">
    <subcellularLocation>
        <location evidence="9">Membrane</location>
        <topology evidence="9">Single-pass membrane protein</topology>
    </subcellularLocation>
</comment>
<comment type="tissue specificity">
    <text evidence="3 4 8">Expressed in the periphery of the shoot apical meristem and inflorescence meristem, on the adaxial sides of developing floral organs and in developing ovules in the region where the integuments emerge.</text>
</comment>
<comment type="developmental stage">
    <text evidence="6">Expressed in the inner integument throughout ovule development.</text>
</comment>
<comment type="disruption phenotype">
    <text evidence="4 5">Reduced size of leaves, sepals, petals and seeds. Increased leaf number.</text>
</comment>
<comment type="miscellaneous">
    <text evidence="10">Plants over-expressing CYP78A5 have twisted and kinked stems, defects in floral organogenesis and reduced fertility.</text>
</comment>
<comment type="similarity">
    <text evidence="9">Belongs to the cytochrome P450 family.</text>
</comment>
<dbReference type="EC" id="1.14.-.-"/>
<dbReference type="EMBL" id="AC027656">
    <property type="protein sequence ID" value="AAF81298.1"/>
    <property type="molecule type" value="Genomic_DNA"/>
</dbReference>
<dbReference type="EMBL" id="CP002684">
    <property type="protein sequence ID" value="AEE29060.1"/>
    <property type="molecule type" value="Genomic_DNA"/>
</dbReference>
<dbReference type="EMBL" id="BT022025">
    <property type="protein sequence ID" value="AAY25437.1"/>
    <property type="molecule type" value="mRNA"/>
</dbReference>
<dbReference type="EMBL" id="BT029218">
    <property type="protein sequence ID" value="ABJ17153.1"/>
    <property type="molecule type" value="mRNA"/>
</dbReference>
<dbReference type="PIR" id="E86270">
    <property type="entry name" value="E86270"/>
</dbReference>
<dbReference type="RefSeq" id="NP_172827.1">
    <property type="nucleotide sequence ID" value="NM_101240.4"/>
</dbReference>
<dbReference type="SMR" id="Q9LMX7"/>
<dbReference type="FunCoup" id="Q9LMX7">
    <property type="interactions" value="51"/>
</dbReference>
<dbReference type="STRING" id="3702.Q9LMX7"/>
<dbReference type="PaxDb" id="3702-AT1G13710.1"/>
<dbReference type="EnsemblPlants" id="AT1G13710.1">
    <property type="protein sequence ID" value="AT1G13710.1"/>
    <property type="gene ID" value="AT1G13710"/>
</dbReference>
<dbReference type="GeneID" id="837932"/>
<dbReference type="Gramene" id="AT1G13710.1">
    <property type="protein sequence ID" value="AT1G13710.1"/>
    <property type="gene ID" value="AT1G13710"/>
</dbReference>
<dbReference type="KEGG" id="ath:AT1G13710"/>
<dbReference type="Araport" id="AT1G13710"/>
<dbReference type="TAIR" id="AT1G13710">
    <property type="gene designation" value="CYP78A5"/>
</dbReference>
<dbReference type="eggNOG" id="KOG0156">
    <property type="taxonomic scope" value="Eukaryota"/>
</dbReference>
<dbReference type="HOGENOM" id="CLU_001570_4_0_1"/>
<dbReference type="InParanoid" id="Q9LMX7"/>
<dbReference type="OMA" id="GDKHIPK"/>
<dbReference type="PhylomeDB" id="Q9LMX7"/>
<dbReference type="PRO" id="PR:Q9LMX7"/>
<dbReference type="Proteomes" id="UP000006548">
    <property type="component" value="Chromosome 1"/>
</dbReference>
<dbReference type="ExpressionAtlas" id="Q9LMX7">
    <property type="expression patterns" value="baseline and differential"/>
</dbReference>
<dbReference type="GO" id="GO:0005783">
    <property type="term" value="C:endoplasmic reticulum"/>
    <property type="evidence" value="ECO:0000314"/>
    <property type="project" value="TAIR"/>
</dbReference>
<dbReference type="GO" id="GO:0016020">
    <property type="term" value="C:membrane"/>
    <property type="evidence" value="ECO:0007669"/>
    <property type="project" value="UniProtKB-SubCell"/>
</dbReference>
<dbReference type="GO" id="GO:0020037">
    <property type="term" value="F:heme binding"/>
    <property type="evidence" value="ECO:0007669"/>
    <property type="project" value="InterPro"/>
</dbReference>
<dbReference type="GO" id="GO:0005506">
    <property type="term" value="F:iron ion binding"/>
    <property type="evidence" value="ECO:0007669"/>
    <property type="project" value="InterPro"/>
</dbReference>
<dbReference type="GO" id="GO:0004497">
    <property type="term" value="F:monooxygenase activity"/>
    <property type="evidence" value="ECO:0007669"/>
    <property type="project" value="UniProtKB-KW"/>
</dbReference>
<dbReference type="GO" id="GO:0016705">
    <property type="term" value="F:oxidoreductase activity, acting on paired donors, with incorporation or reduction of molecular oxygen"/>
    <property type="evidence" value="ECO:0007669"/>
    <property type="project" value="InterPro"/>
</dbReference>
<dbReference type="GO" id="GO:0048437">
    <property type="term" value="P:floral organ development"/>
    <property type="evidence" value="ECO:0000315"/>
    <property type="project" value="TAIR"/>
</dbReference>
<dbReference type="GO" id="GO:0035265">
    <property type="term" value="P:organ growth"/>
    <property type="evidence" value="ECO:0000315"/>
    <property type="project" value="TAIR"/>
</dbReference>
<dbReference type="GO" id="GO:0008284">
    <property type="term" value="P:positive regulation of cell population proliferation"/>
    <property type="evidence" value="ECO:0000315"/>
    <property type="project" value="TAIR"/>
</dbReference>
<dbReference type="GO" id="GO:0046622">
    <property type="term" value="P:positive regulation of organ growth"/>
    <property type="evidence" value="ECO:0000315"/>
    <property type="project" value="TAIR"/>
</dbReference>
<dbReference type="GO" id="GO:0040009">
    <property type="term" value="P:regulation of growth rate"/>
    <property type="evidence" value="ECO:0000315"/>
    <property type="project" value="TAIR"/>
</dbReference>
<dbReference type="CDD" id="cd11076">
    <property type="entry name" value="CYP78"/>
    <property type="match status" value="1"/>
</dbReference>
<dbReference type="FunFam" id="1.10.630.10:FF:000016">
    <property type="entry name" value="Cytochrome P450 78A5"/>
    <property type="match status" value="1"/>
</dbReference>
<dbReference type="Gene3D" id="1.10.630.10">
    <property type="entry name" value="Cytochrome P450"/>
    <property type="match status" value="1"/>
</dbReference>
<dbReference type="InterPro" id="IPR001128">
    <property type="entry name" value="Cyt_P450"/>
</dbReference>
<dbReference type="InterPro" id="IPR017972">
    <property type="entry name" value="Cyt_P450_CS"/>
</dbReference>
<dbReference type="InterPro" id="IPR002401">
    <property type="entry name" value="Cyt_P450_E_grp-I"/>
</dbReference>
<dbReference type="InterPro" id="IPR036396">
    <property type="entry name" value="Cyt_P450_sf"/>
</dbReference>
<dbReference type="InterPro" id="IPR051996">
    <property type="entry name" value="Cytochrome_P450_78A"/>
</dbReference>
<dbReference type="PANTHER" id="PTHR47946:SF10">
    <property type="entry name" value="CYTOCHROME P450 78A5"/>
    <property type="match status" value="1"/>
</dbReference>
<dbReference type="PANTHER" id="PTHR47946">
    <property type="entry name" value="CYTOCHROME P450 78A7-RELATED"/>
    <property type="match status" value="1"/>
</dbReference>
<dbReference type="Pfam" id="PF00067">
    <property type="entry name" value="p450"/>
    <property type="match status" value="1"/>
</dbReference>
<dbReference type="PRINTS" id="PR00463">
    <property type="entry name" value="EP450I"/>
</dbReference>
<dbReference type="PRINTS" id="PR00385">
    <property type="entry name" value="P450"/>
</dbReference>
<dbReference type="SUPFAM" id="SSF48264">
    <property type="entry name" value="Cytochrome P450"/>
    <property type="match status" value="1"/>
</dbReference>
<dbReference type="PROSITE" id="PS00086">
    <property type="entry name" value="CYTOCHROME_P450"/>
    <property type="match status" value="1"/>
</dbReference>
<feature type="chain" id="PRO_0000422986" description="Cytochrome P450 78A5">
    <location>
        <begin position="1"/>
        <end position="517"/>
    </location>
</feature>
<feature type="transmembrane region" description="Helical" evidence="2">
    <location>
        <begin position="20"/>
        <end position="40"/>
    </location>
</feature>
<feature type="binding site" description="axial binding residue" evidence="1">
    <location>
        <position position="459"/>
    </location>
    <ligand>
        <name>heme</name>
        <dbReference type="ChEBI" id="CHEBI:30413"/>
    </ligand>
    <ligandPart>
        <name>Fe</name>
        <dbReference type="ChEBI" id="CHEBI:18248"/>
    </ligandPart>
</feature>
<sequence>MSPEAYVLFFNSFNLVTFEAFASVSLIIATVAFLLSPGGLAWAWTGSSKSRVSIPGPSGSLSVFSGSNPHRVLAALAKRFKASPLMAFSVGFSRFVISSEPETAKEILSSSAFADRPVKESAYELLFHRAMGFAPYGEYWRNLRRISSTHLFSPRRIASFEGVRVGIGMKMVKKIKSLVTSDACGEVEVKKIVHFGSLNNVMTTVFGESYDFDEVNGKGCFLERLVSEGYELLGIFNWSDHFWFLRWFDFQGVRKRCRALVSEVNTFVGGIIEKHKMKKGNNLNGEENDFVDVLLGLQKDEKLSDSDMIAVLWEMIFRGTDTVAILVEWVLARMVLHQDIQDKLYREIASATSNNIRSLSDSDIPKLPYLQAIVKETLRLHPPGPLLSWARLAIHDVHVGPNLVPAGTIAMVNMWSITHNAKIWTDPEAFMPERFISEDVSIMGSDLRLAPFGSGRRVCPGKAMGLATVHLWIGQLIQNFEWVKGSCDVELAEVLKLSMEMKNPLKCKAVPRNVGFA</sequence>
<name>C78A5_ARATH</name>
<gene>
    <name type="primary">CYP78A5</name>
    <name type="synonym">KLU</name>
    <name type="ordered locus">At1g13710</name>
    <name type="ORF">F21F23.15</name>
</gene>
<reference key="1">
    <citation type="journal article" date="2000" name="Nature">
        <title>Sequence and analysis of chromosome 1 of the plant Arabidopsis thaliana.</title>
        <authorList>
            <person name="Theologis A."/>
            <person name="Ecker J.R."/>
            <person name="Palm C.J."/>
            <person name="Federspiel N.A."/>
            <person name="Kaul S."/>
            <person name="White O."/>
            <person name="Alonso J."/>
            <person name="Altafi H."/>
            <person name="Araujo R."/>
            <person name="Bowman C.L."/>
            <person name="Brooks S.Y."/>
            <person name="Buehler E."/>
            <person name="Chan A."/>
            <person name="Chao Q."/>
            <person name="Chen H."/>
            <person name="Cheuk R.F."/>
            <person name="Chin C.W."/>
            <person name="Chung M.K."/>
            <person name="Conn L."/>
            <person name="Conway A.B."/>
            <person name="Conway A.R."/>
            <person name="Creasy T.H."/>
            <person name="Dewar K."/>
            <person name="Dunn P."/>
            <person name="Etgu P."/>
            <person name="Feldblyum T.V."/>
            <person name="Feng J.-D."/>
            <person name="Fong B."/>
            <person name="Fujii C.Y."/>
            <person name="Gill J.E."/>
            <person name="Goldsmith A.D."/>
            <person name="Haas B."/>
            <person name="Hansen N.F."/>
            <person name="Hughes B."/>
            <person name="Huizar L."/>
            <person name="Hunter J.L."/>
            <person name="Jenkins J."/>
            <person name="Johnson-Hopson C."/>
            <person name="Khan S."/>
            <person name="Khaykin E."/>
            <person name="Kim C.J."/>
            <person name="Koo H.L."/>
            <person name="Kremenetskaia I."/>
            <person name="Kurtz D.B."/>
            <person name="Kwan A."/>
            <person name="Lam B."/>
            <person name="Langin-Hooper S."/>
            <person name="Lee A."/>
            <person name="Lee J.M."/>
            <person name="Lenz C.A."/>
            <person name="Li J.H."/>
            <person name="Li Y.-P."/>
            <person name="Lin X."/>
            <person name="Liu S.X."/>
            <person name="Liu Z.A."/>
            <person name="Luros J.S."/>
            <person name="Maiti R."/>
            <person name="Marziali A."/>
            <person name="Militscher J."/>
            <person name="Miranda M."/>
            <person name="Nguyen M."/>
            <person name="Nierman W.C."/>
            <person name="Osborne B.I."/>
            <person name="Pai G."/>
            <person name="Peterson J."/>
            <person name="Pham P.K."/>
            <person name="Rizzo M."/>
            <person name="Rooney T."/>
            <person name="Rowley D."/>
            <person name="Sakano H."/>
            <person name="Salzberg S.L."/>
            <person name="Schwartz J.R."/>
            <person name="Shinn P."/>
            <person name="Southwick A.M."/>
            <person name="Sun H."/>
            <person name="Tallon L.J."/>
            <person name="Tambunga G."/>
            <person name="Toriumi M.J."/>
            <person name="Town C.D."/>
            <person name="Utterback T."/>
            <person name="Van Aken S."/>
            <person name="Vaysberg M."/>
            <person name="Vysotskaia V.S."/>
            <person name="Walker M."/>
            <person name="Wu D."/>
            <person name="Yu G."/>
            <person name="Fraser C.M."/>
            <person name="Venter J.C."/>
            <person name="Davis R.W."/>
        </authorList>
    </citation>
    <scope>NUCLEOTIDE SEQUENCE [LARGE SCALE GENOMIC DNA]</scope>
    <source>
        <strain>cv. Columbia</strain>
    </source>
</reference>
<reference key="2">
    <citation type="journal article" date="2017" name="Plant J.">
        <title>Araport11: a complete reannotation of the Arabidopsis thaliana reference genome.</title>
        <authorList>
            <person name="Cheng C.Y."/>
            <person name="Krishnakumar V."/>
            <person name="Chan A.P."/>
            <person name="Thibaud-Nissen F."/>
            <person name="Schobel S."/>
            <person name="Town C.D."/>
        </authorList>
    </citation>
    <scope>GENOME REANNOTATION</scope>
    <source>
        <strain>cv. Columbia</strain>
    </source>
</reference>
<reference key="3">
    <citation type="submission" date="2006-10" db="EMBL/GenBank/DDBJ databases">
        <title>Arabidopsis ORF Clones.</title>
        <authorList>
            <person name="Quinitio C."/>
            <person name="Chen H."/>
            <person name="Kim C.J."/>
            <person name="Shinn P."/>
            <person name="Ecker J.R."/>
        </authorList>
    </citation>
    <scope>NUCLEOTIDE SEQUENCE [LARGE SCALE MRNA]</scope>
    <source>
        <strain>cv. Columbia</strain>
    </source>
</reference>
<reference key="4">
    <citation type="journal article" date="1999" name="Plant J.">
        <title>CYP78A5 encodes a cytochrome P450 that marks the shoot apical meristem boundary in Arabidopsis.</title>
        <authorList>
            <person name="Zondlo S.C."/>
            <person name="Irish V.F."/>
        </authorList>
    </citation>
    <scope>FUNCTION</scope>
    <scope>TISSUE SPECIFICITY</scope>
</reference>
<reference key="5">
    <citation type="journal article" date="2007" name="Dev. Cell">
        <title>Control of plant organ size by KLUH/CYP78A5-dependent intercellular signaling.</title>
        <authorList>
            <person name="Anastasiou E."/>
            <person name="Kenz S."/>
            <person name="Gerstung M."/>
            <person name="MacLean D."/>
            <person name="Timmer J."/>
            <person name="Fleck C."/>
            <person name="Lenhard M."/>
        </authorList>
    </citation>
    <scope>FUNCTION</scope>
    <scope>SUBCELLULAR LOCATION</scope>
    <scope>TISSUE SPECIFICITY</scope>
    <scope>DISRUPTION PHENOTYPE</scope>
    <source>
        <strain>cv. Landsberg erecta</strain>
    </source>
</reference>
<reference key="6">
    <citation type="journal article" date="2008" name="Plant Cell">
        <title>Dual effects of miR156-targeted SPL genes and CYP78A5/KLUH on plastochron length and organ size in Arabidopsis thaliana.</title>
        <authorList>
            <person name="Wang J.W."/>
            <person name="Schwab R."/>
            <person name="Czech B."/>
            <person name="Mica E."/>
            <person name="Weigel D."/>
        </authorList>
    </citation>
    <scope>FUNCTION</scope>
    <scope>DISRUPTION PHENOTYPE</scope>
    <source>
        <strain>cv. Columbia</strain>
    </source>
</reference>
<reference key="7">
    <citation type="journal article" date="2009" name="Proc. Natl. Acad. Sci. U.S.A.">
        <title>Local maternal control of seed size by KLUH/CYP78A5-dependent growth signaling.</title>
        <authorList>
            <person name="Adamski N.M."/>
            <person name="Anastasiou E."/>
            <person name="Eriksson S."/>
            <person name="O'Neill C.M."/>
            <person name="Lenhard M."/>
        </authorList>
    </citation>
    <scope>FUNCTION</scope>
    <scope>DEVELOPMENTAL STAGE</scope>
    <source>
        <strain>cv. Landsberg erecta</strain>
    </source>
</reference>
<reference key="8">
    <citation type="journal article" date="2010" name="Curr. Biol.">
        <title>KLUH/CYP78A5-dependent growth signaling coordinates floral organ growth in Arabidopsis.</title>
        <authorList>
            <person name="Eriksson S."/>
            <person name="Stransfeld L."/>
            <person name="Adamski N.M."/>
            <person name="Breuninger H."/>
            <person name="Lenhard M."/>
        </authorList>
    </citation>
    <scope>FUNCTION</scope>
</reference>
<reference key="9">
    <citation type="journal article" date="2010" name="Plant Cell Physiol.">
        <title>The mechanism of cell cycle arrest front progression explained by a KLUH/CYP78A5-dependent mobile growth factor in developing leaves of Arabidopsis thaliana.</title>
        <authorList>
            <person name="Kazama T."/>
            <person name="Ichihashi Y."/>
            <person name="Murata S."/>
            <person name="Tsukaya H."/>
        </authorList>
    </citation>
    <scope>TISSUE SPECIFICITY</scope>
</reference>
<proteinExistence type="evidence at transcript level"/>
<keyword id="KW-0217">Developmental protein</keyword>
<keyword id="KW-0341">Growth regulation</keyword>
<keyword id="KW-0349">Heme</keyword>
<keyword id="KW-0408">Iron</keyword>
<keyword id="KW-0472">Membrane</keyword>
<keyword id="KW-0479">Metal-binding</keyword>
<keyword id="KW-0503">Monooxygenase</keyword>
<keyword id="KW-0560">Oxidoreductase</keyword>
<keyword id="KW-1185">Reference proteome</keyword>
<keyword id="KW-0812">Transmembrane</keyword>
<keyword id="KW-1133">Transmembrane helix</keyword>
<protein>
    <recommendedName>
        <fullName>Cytochrome P450 78A5</fullName>
        <ecNumber>1.14.-.-</ecNumber>
    </recommendedName>
    <alternativeName>
        <fullName>Protein KLUH</fullName>
    </alternativeName>
</protein>